<organism>
    <name type="scientific">Vibrio vulnificus (strain YJ016)</name>
    <dbReference type="NCBI Taxonomy" id="196600"/>
    <lineage>
        <taxon>Bacteria</taxon>
        <taxon>Pseudomonadati</taxon>
        <taxon>Pseudomonadota</taxon>
        <taxon>Gammaproteobacteria</taxon>
        <taxon>Vibrionales</taxon>
        <taxon>Vibrionaceae</taxon>
        <taxon>Vibrio</taxon>
    </lineage>
</organism>
<keyword id="KW-0963">Cytoplasm</keyword>
<keyword id="KW-0249">Electron transport</keyword>
<keyword id="KW-0285">Flavoprotein</keyword>
<keyword id="KW-0288">FMN</keyword>
<keyword id="KW-0408">Iron</keyword>
<keyword id="KW-0479">Metal-binding</keyword>
<keyword id="KW-0560">Oxidoreductase</keyword>
<keyword id="KW-0813">Transport</keyword>
<dbReference type="EMBL" id="BA000038">
    <property type="protein sequence ID" value="BAC96207.1"/>
    <property type="molecule type" value="Genomic_DNA"/>
</dbReference>
<dbReference type="RefSeq" id="WP_011151604.1">
    <property type="nucleotide sequence ID" value="NC_005140.1"/>
</dbReference>
<dbReference type="SMR" id="Q7MFY8"/>
<dbReference type="KEGG" id="vvy:VVA0181"/>
<dbReference type="HOGENOM" id="CLU_017490_0_1_6"/>
<dbReference type="UniPathway" id="UPA00638"/>
<dbReference type="Proteomes" id="UP000002675">
    <property type="component" value="Chromosome II"/>
</dbReference>
<dbReference type="GO" id="GO:0005737">
    <property type="term" value="C:cytoplasm"/>
    <property type="evidence" value="ECO:0007669"/>
    <property type="project" value="UniProtKB-SubCell"/>
</dbReference>
<dbReference type="GO" id="GO:0009055">
    <property type="term" value="F:electron transfer activity"/>
    <property type="evidence" value="ECO:0007669"/>
    <property type="project" value="UniProtKB-UniRule"/>
</dbReference>
<dbReference type="GO" id="GO:0010181">
    <property type="term" value="F:FMN binding"/>
    <property type="evidence" value="ECO:0007669"/>
    <property type="project" value="InterPro"/>
</dbReference>
<dbReference type="GO" id="GO:0005506">
    <property type="term" value="F:iron ion binding"/>
    <property type="evidence" value="ECO:0007669"/>
    <property type="project" value="InterPro"/>
</dbReference>
<dbReference type="GO" id="GO:0016966">
    <property type="term" value="F:nitric oxide reductase activity"/>
    <property type="evidence" value="ECO:0007669"/>
    <property type="project" value="InterPro"/>
</dbReference>
<dbReference type="CDD" id="cd07709">
    <property type="entry name" value="flavodiiron_proteins_MBL-fold"/>
    <property type="match status" value="1"/>
</dbReference>
<dbReference type="CDD" id="cd00730">
    <property type="entry name" value="rubredoxin"/>
    <property type="match status" value="1"/>
</dbReference>
<dbReference type="Gene3D" id="2.20.28.10">
    <property type="match status" value="1"/>
</dbReference>
<dbReference type="Gene3D" id="3.40.50.360">
    <property type="match status" value="1"/>
</dbReference>
<dbReference type="Gene3D" id="3.60.15.10">
    <property type="entry name" value="Ribonuclease Z/Hydroxyacylglutathione hydrolase-like"/>
    <property type="match status" value="1"/>
</dbReference>
<dbReference type="HAMAP" id="MF_01312">
    <property type="entry name" value="NorV"/>
    <property type="match status" value="1"/>
</dbReference>
<dbReference type="InterPro" id="IPR023957">
    <property type="entry name" value="Anaer_NO_rdtase_flvorubredoxin"/>
</dbReference>
<dbReference type="InterPro" id="IPR008254">
    <property type="entry name" value="Flavodoxin/NO_synth"/>
</dbReference>
<dbReference type="InterPro" id="IPR029039">
    <property type="entry name" value="Flavoprotein-like_sf"/>
</dbReference>
<dbReference type="InterPro" id="IPR001279">
    <property type="entry name" value="Metallo-B-lactamas"/>
</dbReference>
<dbReference type="InterPro" id="IPR045761">
    <property type="entry name" value="ODP_dom"/>
</dbReference>
<dbReference type="InterPro" id="IPR036866">
    <property type="entry name" value="RibonucZ/Hydroxyglut_hydro"/>
</dbReference>
<dbReference type="InterPro" id="IPR024934">
    <property type="entry name" value="Rubredoxin-like_dom"/>
</dbReference>
<dbReference type="InterPro" id="IPR016440">
    <property type="entry name" value="Rubredoxin-O_OxRdtase"/>
</dbReference>
<dbReference type="InterPro" id="IPR024935">
    <property type="entry name" value="Rubredoxin_dom"/>
</dbReference>
<dbReference type="NCBIfam" id="NF003954">
    <property type="entry name" value="PRK05452.1"/>
    <property type="match status" value="1"/>
</dbReference>
<dbReference type="PANTHER" id="PTHR43717">
    <property type="entry name" value="ANAEROBIC NITRIC OXIDE REDUCTASE FLAVORUBREDOXIN"/>
    <property type="match status" value="1"/>
</dbReference>
<dbReference type="PANTHER" id="PTHR43717:SF1">
    <property type="entry name" value="ANAEROBIC NITRIC OXIDE REDUCTASE FLAVORUBREDOXIN"/>
    <property type="match status" value="1"/>
</dbReference>
<dbReference type="Pfam" id="PF00258">
    <property type="entry name" value="Flavodoxin_1"/>
    <property type="match status" value="1"/>
</dbReference>
<dbReference type="Pfam" id="PF19583">
    <property type="entry name" value="ODP"/>
    <property type="match status" value="1"/>
</dbReference>
<dbReference type="Pfam" id="PF00301">
    <property type="entry name" value="Rubredoxin"/>
    <property type="match status" value="1"/>
</dbReference>
<dbReference type="PIRSF" id="PIRSF005243">
    <property type="entry name" value="ROO"/>
    <property type="match status" value="1"/>
</dbReference>
<dbReference type="PRINTS" id="PR00163">
    <property type="entry name" value="RUBREDOXIN"/>
</dbReference>
<dbReference type="SMART" id="SM00849">
    <property type="entry name" value="Lactamase_B"/>
    <property type="match status" value="1"/>
</dbReference>
<dbReference type="SUPFAM" id="SSF52218">
    <property type="entry name" value="Flavoproteins"/>
    <property type="match status" value="1"/>
</dbReference>
<dbReference type="SUPFAM" id="SSF56281">
    <property type="entry name" value="Metallo-hydrolase/oxidoreductase"/>
    <property type="match status" value="1"/>
</dbReference>
<dbReference type="SUPFAM" id="SSF57802">
    <property type="entry name" value="Rubredoxin-like"/>
    <property type="match status" value="1"/>
</dbReference>
<dbReference type="PROSITE" id="PS50902">
    <property type="entry name" value="FLAVODOXIN_LIKE"/>
    <property type="match status" value="1"/>
</dbReference>
<dbReference type="PROSITE" id="PS50903">
    <property type="entry name" value="RUBREDOXIN_LIKE"/>
    <property type="match status" value="1"/>
</dbReference>
<name>NORV_VIBVY</name>
<proteinExistence type="inferred from homology"/>
<reference key="1">
    <citation type="journal article" date="2003" name="Genome Res.">
        <title>Comparative genome analysis of Vibrio vulnificus, a marine pathogen.</title>
        <authorList>
            <person name="Chen C.-Y."/>
            <person name="Wu K.-M."/>
            <person name="Chang Y.-C."/>
            <person name="Chang C.-H."/>
            <person name="Tsai H.-C."/>
            <person name="Liao T.-L."/>
            <person name="Liu Y.-M."/>
            <person name="Chen H.-J."/>
            <person name="Shen A.B.-T."/>
            <person name="Li J.-C."/>
            <person name="Su T.-L."/>
            <person name="Shao C.-P."/>
            <person name="Lee C.-T."/>
            <person name="Hor L.-I."/>
            <person name="Tsai S.-F."/>
        </authorList>
    </citation>
    <scope>NUCLEOTIDE SEQUENCE [LARGE SCALE GENOMIC DNA]</scope>
    <source>
        <strain>YJ016</strain>
    </source>
</reference>
<accession>Q7MFY8</accession>
<protein>
    <recommendedName>
        <fullName evidence="1">Anaerobic nitric oxide reductase flavorubredoxin</fullName>
        <shortName evidence="1">FlRd</shortName>
        <shortName evidence="1">FlavoRb</shortName>
    </recommendedName>
</protein>
<comment type="function">
    <text evidence="1">Anaerobic nitric oxide reductase; uses NADH to detoxify nitric oxide (NO), protecting several 4Fe-4S NO-sensitive enzymes. Has at least 2 reductase partners, only one of which (NorW, flavorubredoxin reductase) has been identified. NO probably binds to the di-iron center; electrons enter from the NorW at rubredoxin and are transferred sequentially to the FMN center and the di-iron center. Also able to function as an aerobic oxygen reductase.</text>
</comment>
<comment type="cofactor">
    <cofactor evidence="1">
        <name>Fe cation</name>
        <dbReference type="ChEBI" id="CHEBI:24875"/>
    </cofactor>
    <text evidence="1">Binds 3 Fe cations per monomer.</text>
</comment>
<comment type="cofactor">
    <cofactor evidence="1">
        <name>FMN</name>
        <dbReference type="ChEBI" id="CHEBI:58210"/>
    </cofactor>
    <text evidence="1">Binds 1 FMN per monomer.</text>
</comment>
<comment type="pathway">
    <text evidence="1">Nitrogen metabolism; nitric oxide reduction.</text>
</comment>
<comment type="subunit">
    <text evidence="1">Homotetramer.</text>
</comment>
<comment type="subcellular location">
    <subcellularLocation>
        <location evidence="1">Cytoplasm</location>
    </subcellularLocation>
</comment>
<comment type="similarity">
    <text evidence="1">In the N-terminal section; belongs to the zinc metallo-hydrolase group 3 family.</text>
</comment>
<sequence>MTIHVKNNIHWVGQRDWEVQDFHGTEYKMTKGTSYNSYLIREEKTVLIDTVDHRFSQQFIQNLQMEIDLQSIDFIVINHAEEDHSGALSALMEKIPNTPIYCTEAAIDSIVGHHHHPEWNFKTVKTGDSIDIGNGKQLVFVEAPMLHWPDSMMTYLTGDAVLFSNDAFGQHYCDERLFNDEVDQAELMEQCLRYYSNILTPFSALVTAKIQEVLSFNLPVDMIATSHGIVWRENPTQIIEQYLAWANNYQEDRITIFYDSMSNNTRMMADAIAQGIHDVDPSVAVKVFNVSKQDKNEILANVFRSKGILVGSSTMNNVMMPKIAGMLEEITGLRFKAKKAAAFGSYGWNGGAVDRIHARLTDAGFETAISLKTKWRPDGKAMRECREHGQQIAKLWAVKDKSTLSTPVNAFQSATPIEGIEAQQPLTETTPTADAAHSADCQCMVCTVCNWVYDPAKGEPNQGIEVGTTWADVPDYFLCPECHLGKDVFVEYQG</sequence>
<gene>
    <name evidence="1" type="primary">norV</name>
    <name evidence="1" type="synonym">flrD</name>
    <name type="ordered locus">VVA0181</name>
</gene>
<feature type="chain" id="PRO_0000305602" description="Anaerobic nitric oxide reductase flavorubredoxin">
    <location>
        <begin position="1"/>
        <end position="494"/>
    </location>
</feature>
<feature type="domain" description="Flavodoxin-like" evidence="1">
    <location>
        <begin position="254"/>
        <end position="393"/>
    </location>
</feature>
<feature type="domain" description="Rubredoxin-like" evidence="1">
    <location>
        <begin position="441"/>
        <end position="492"/>
    </location>
</feature>
<feature type="region of interest" description="Zinc metallo-hydrolase">
    <location>
        <begin position="30"/>
        <end position="210"/>
    </location>
</feature>
<feature type="binding site" evidence="1">
    <location>
        <position position="79"/>
    </location>
    <ligand>
        <name>Fe cation</name>
        <dbReference type="ChEBI" id="CHEBI:24875"/>
        <label>1</label>
    </ligand>
</feature>
<feature type="binding site" evidence="1">
    <location>
        <position position="81"/>
    </location>
    <ligand>
        <name>Fe cation</name>
        <dbReference type="ChEBI" id="CHEBI:24875"/>
        <label>1</label>
    </ligand>
</feature>
<feature type="binding site" evidence="1">
    <location>
        <position position="83"/>
    </location>
    <ligand>
        <name>Fe cation</name>
        <dbReference type="ChEBI" id="CHEBI:24875"/>
        <label>2</label>
    </ligand>
</feature>
<feature type="binding site" evidence="1">
    <location>
        <position position="147"/>
    </location>
    <ligand>
        <name>Fe cation</name>
        <dbReference type="ChEBI" id="CHEBI:24875"/>
        <label>1</label>
    </ligand>
</feature>
<feature type="binding site" evidence="1">
    <location>
        <position position="166"/>
    </location>
    <ligand>
        <name>Fe cation</name>
        <dbReference type="ChEBI" id="CHEBI:24875"/>
        <label>1</label>
    </ligand>
</feature>
<feature type="binding site" evidence="1">
    <location>
        <position position="166"/>
    </location>
    <ligand>
        <name>Fe cation</name>
        <dbReference type="ChEBI" id="CHEBI:24875"/>
        <label>2</label>
    </ligand>
</feature>
<feature type="binding site" evidence="1">
    <location>
        <position position="227"/>
    </location>
    <ligand>
        <name>Fe cation</name>
        <dbReference type="ChEBI" id="CHEBI:24875"/>
        <label>2</label>
    </ligand>
</feature>
<feature type="binding site" evidence="1">
    <location>
        <begin position="260"/>
        <end position="264"/>
    </location>
    <ligand>
        <name>FMN</name>
        <dbReference type="ChEBI" id="CHEBI:58210"/>
    </ligand>
</feature>
<feature type="binding site" evidence="1">
    <location>
        <begin position="342"/>
        <end position="369"/>
    </location>
    <ligand>
        <name>FMN</name>
        <dbReference type="ChEBI" id="CHEBI:58210"/>
    </ligand>
</feature>
<feature type="binding site" evidence="1">
    <location>
        <position position="446"/>
    </location>
    <ligand>
        <name>Fe cation</name>
        <dbReference type="ChEBI" id="CHEBI:24875"/>
        <label>3</label>
    </ligand>
</feature>
<feature type="binding site" evidence="1">
    <location>
        <position position="449"/>
    </location>
    <ligand>
        <name>Fe cation</name>
        <dbReference type="ChEBI" id="CHEBI:24875"/>
        <label>3</label>
    </ligand>
</feature>
<feature type="binding site" evidence="1">
    <location>
        <position position="479"/>
    </location>
    <ligand>
        <name>Fe cation</name>
        <dbReference type="ChEBI" id="CHEBI:24875"/>
        <label>3</label>
    </ligand>
</feature>
<feature type="binding site" evidence="1">
    <location>
        <position position="482"/>
    </location>
    <ligand>
        <name>Fe cation</name>
        <dbReference type="ChEBI" id="CHEBI:24875"/>
        <label>3</label>
    </ligand>
</feature>
<evidence type="ECO:0000255" key="1">
    <source>
        <dbReference type="HAMAP-Rule" id="MF_01312"/>
    </source>
</evidence>